<keyword id="KW-0175">Coiled coil</keyword>
<keyword id="KW-0472">Membrane</keyword>
<keyword id="KW-0496">Mitochondrion</keyword>
<keyword id="KW-0999">Mitochondrion inner membrane</keyword>
<keyword id="KW-1185">Reference proteome</keyword>
<keyword id="KW-0809">Transit peptide</keyword>
<keyword id="KW-0812">Transmembrane</keyword>
<keyword id="KW-1133">Transmembrane helix</keyword>
<feature type="transit peptide" description="Mitochondrion" evidence="2">
    <location>
        <begin position="1"/>
        <end position="45"/>
    </location>
</feature>
<feature type="chain" id="PRO_0000244478" description="LETM1 domain-containing protein YLH47, mitochondrial">
    <location>
        <begin position="46"/>
        <end position="454"/>
    </location>
</feature>
<feature type="topological domain" description="Mitochondrial intermembrane" evidence="1">
    <location>
        <begin position="46"/>
        <end position="136"/>
    </location>
</feature>
<feature type="transmembrane region" description="Helical" evidence="2">
    <location>
        <begin position="137"/>
        <end position="157"/>
    </location>
</feature>
<feature type="topological domain" description="Mitochondrial matrix" evidence="1">
    <location>
        <begin position="158"/>
        <end position="454"/>
    </location>
</feature>
<feature type="domain" description="Letm1 RBD" evidence="3">
    <location>
        <begin position="177"/>
        <end position="371"/>
    </location>
</feature>
<feature type="region of interest" description="Disordered" evidence="4">
    <location>
        <begin position="51"/>
        <end position="73"/>
    </location>
</feature>
<feature type="region of interest" description="Disordered" evidence="4">
    <location>
        <begin position="420"/>
        <end position="454"/>
    </location>
</feature>
<feature type="coiled-coil region" evidence="2">
    <location>
        <begin position="376"/>
        <end position="423"/>
    </location>
</feature>
<feature type="compositionally biased region" description="Basic and acidic residues" evidence="4">
    <location>
        <begin position="420"/>
        <end position="430"/>
    </location>
</feature>
<feature type="compositionally biased region" description="Basic and acidic residues" evidence="4">
    <location>
        <begin position="437"/>
        <end position="454"/>
    </location>
</feature>
<feature type="sequence conflict" description="In Ref. 1 and 2; AAB70096." evidence="10" ref="1 2">
    <original>G</original>
    <variation>R</variation>
    <location>
        <position position="265"/>
    </location>
</feature>
<feature type="sequence conflict" description="In Ref. 1 and 2; AAB70096." evidence="10" ref="1 2">
    <original>P</original>
    <variation>L</variation>
    <location>
        <position position="439"/>
    </location>
</feature>
<feature type="sequence conflict" description="In Ref. 1 and 2; AAB70096." evidence="10" ref="1 2">
    <original>T</original>
    <variation>S</variation>
    <location>
        <position position="442"/>
    </location>
</feature>
<gene>
    <name type="primary">YLH47</name>
    <name type="synonym">MRS7</name>
    <name type="ordered locus">YPR125W</name>
</gene>
<name>YLH47_YEAST</name>
<dbReference type="EMBL" id="U48418">
    <property type="protein sequence ID" value="AAB70096.1"/>
    <property type="molecule type" value="Genomic_DNA"/>
</dbReference>
<dbReference type="EMBL" id="U40828">
    <property type="protein sequence ID" value="AAB68065.1"/>
    <property type="molecule type" value="Genomic_DNA"/>
</dbReference>
<dbReference type="EMBL" id="BK006949">
    <property type="protein sequence ID" value="DAA11539.1"/>
    <property type="molecule type" value="Genomic_DNA"/>
</dbReference>
<dbReference type="PIR" id="S69017">
    <property type="entry name" value="S69017"/>
</dbReference>
<dbReference type="RefSeq" id="NP_015450.1">
    <property type="nucleotide sequence ID" value="NM_001184222.1"/>
</dbReference>
<dbReference type="SMR" id="Q06493"/>
<dbReference type="BioGRID" id="36293">
    <property type="interactions" value="109"/>
</dbReference>
<dbReference type="DIP" id="DIP-5345N"/>
<dbReference type="FunCoup" id="Q06493">
    <property type="interactions" value="636"/>
</dbReference>
<dbReference type="IntAct" id="Q06493">
    <property type="interactions" value="5"/>
</dbReference>
<dbReference type="MINT" id="Q06493"/>
<dbReference type="STRING" id="4932.YPR125W"/>
<dbReference type="TCDB" id="2.A.97.1.4">
    <property type="family name" value="the mitochondrial inner membrane k(+)/h(+) and ca(2+)/h(+) exchanger (letm1) family"/>
</dbReference>
<dbReference type="iPTMnet" id="Q06493"/>
<dbReference type="PaxDb" id="4932-YPR125W"/>
<dbReference type="PeptideAtlas" id="Q06493"/>
<dbReference type="EnsemblFungi" id="YPR125W_mRNA">
    <property type="protein sequence ID" value="YPR125W"/>
    <property type="gene ID" value="YPR125W"/>
</dbReference>
<dbReference type="GeneID" id="856243"/>
<dbReference type="KEGG" id="sce:YPR125W"/>
<dbReference type="AGR" id="SGD:S000006329"/>
<dbReference type="SGD" id="S000006329">
    <property type="gene designation" value="YLH47"/>
</dbReference>
<dbReference type="VEuPathDB" id="FungiDB:YPR125W"/>
<dbReference type="eggNOG" id="KOG1043">
    <property type="taxonomic scope" value="Eukaryota"/>
</dbReference>
<dbReference type="GeneTree" id="ENSGT00950000183167"/>
<dbReference type="HOGENOM" id="CLU_008958_5_0_1"/>
<dbReference type="InParanoid" id="Q06493"/>
<dbReference type="OMA" id="LQHYWDG"/>
<dbReference type="OrthoDB" id="275278at2759"/>
<dbReference type="BioCyc" id="YEAST:G3O-34263-MONOMER"/>
<dbReference type="BioGRID-ORCS" id="856243">
    <property type="hits" value="1 hit in 10 CRISPR screens"/>
</dbReference>
<dbReference type="PRO" id="PR:Q06493"/>
<dbReference type="Proteomes" id="UP000002311">
    <property type="component" value="Chromosome XVI"/>
</dbReference>
<dbReference type="RNAct" id="Q06493">
    <property type="molecule type" value="protein"/>
</dbReference>
<dbReference type="GO" id="GO:0005743">
    <property type="term" value="C:mitochondrial inner membrane"/>
    <property type="evidence" value="ECO:0000314"/>
    <property type="project" value="SGD"/>
</dbReference>
<dbReference type="GO" id="GO:0005739">
    <property type="term" value="C:mitochondrion"/>
    <property type="evidence" value="ECO:0007005"/>
    <property type="project" value="SGD"/>
</dbReference>
<dbReference type="GO" id="GO:0043022">
    <property type="term" value="F:ribosome binding"/>
    <property type="evidence" value="ECO:0007669"/>
    <property type="project" value="InterPro"/>
</dbReference>
<dbReference type="GO" id="GO:0006813">
    <property type="term" value="P:potassium ion transport"/>
    <property type="evidence" value="ECO:0000316"/>
    <property type="project" value="SGD"/>
</dbReference>
<dbReference type="GO" id="GO:0032979">
    <property type="term" value="P:protein insertion into mitochondrial inner membrane from matrix"/>
    <property type="evidence" value="ECO:0000315"/>
    <property type="project" value="SGD"/>
</dbReference>
<dbReference type="GO" id="GO:1902600">
    <property type="term" value="P:proton transmembrane transport"/>
    <property type="evidence" value="ECO:0000316"/>
    <property type="project" value="SGD"/>
</dbReference>
<dbReference type="InterPro" id="IPR033122">
    <property type="entry name" value="LETM1-like_RBD"/>
</dbReference>
<dbReference type="InterPro" id="IPR044202">
    <property type="entry name" value="LETM1/MDM38-like"/>
</dbReference>
<dbReference type="PANTHER" id="PTHR14009:SF11">
    <property type="entry name" value="LETM1 DOMAIN-CONTAINING PROTEIN YLH47, MITOCHONDRIAL"/>
    <property type="match status" value="1"/>
</dbReference>
<dbReference type="PANTHER" id="PTHR14009">
    <property type="entry name" value="LEUCINE ZIPPER-EF-HAND CONTAINING TRANSMEMBRANE PROTEIN"/>
    <property type="match status" value="1"/>
</dbReference>
<dbReference type="Pfam" id="PF07766">
    <property type="entry name" value="LETM1_RBD"/>
    <property type="match status" value="1"/>
</dbReference>
<dbReference type="PROSITE" id="PS51758">
    <property type="entry name" value="LETM1_RBD"/>
    <property type="match status" value="1"/>
</dbReference>
<proteinExistence type="evidence at protein level"/>
<accession>Q06493</accession>
<accession>D6W4C3</accession>
<accession>P89103</accession>
<comment type="function">
    <text evidence="1 7">Involved in mitochondrial potassium homeostasis through the mitochondrial K(+)/H(+) exchange regulation.</text>
</comment>
<comment type="subunit">
    <text>Associates with the mitochondrial ribosomes.</text>
</comment>
<comment type="subcellular location">
    <subcellularLocation>
        <location evidence="5 7 8 9">Mitochondrion inner membrane</location>
        <topology evidence="5 7 8 9">Single-pass membrane protein</topology>
    </subcellularLocation>
</comment>
<comment type="miscellaneous">
    <text evidence="6">Present with 11300 molecules/cell in log phase SD medium.</text>
</comment>
<organism>
    <name type="scientific">Saccharomyces cerevisiae (strain ATCC 204508 / S288c)</name>
    <name type="common">Baker's yeast</name>
    <dbReference type="NCBI Taxonomy" id="559292"/>
    <lineage>
        <taxon>Eukaryota</taxon>
        <taxon>Fungi</taxon>
        <taxon>Dikarya</taxon>
        <taxon>Ascomycota</taxon>
        <taxon>Saccharomycotina</taxon>
        <taxon>Saccharomycetes</taxon>
        <taxon>Saccharomycetales</taxon>
        <taxon>Saccharomycetaceae</taxon>
        <taxon>Saccharomyces</taxon>
    </lineage>
</organism>
<protein>
    <recommendedName>
        <fullName>LETM1 domain-containing protein YLH47, mitochondrial</fullName>
    </recommendedName>
    <alternativeName>
        <fullName>LETM1 homolog</fullName>
    </alternativeName>
</protein>
<sequence length="454" mass="52174">MLKYRSLPIKRAIHHPAPGITPISPRIMVSRLRVIPSFNLKFNRWNSSVPESSKKELKTTDGNQESASKVSPVKEKEKVPFKVKMQKALRHYWDGSKLLGLEIKISSKLLMKSAAGYPLTRRENLQLKRTTQDIVRLVPFAAFLIIPFAELLLPFALKLFPNLLPSTYESSKKRENKLENLRNTRKLMSEIIKNNKSHFKPNNISEEQKALFNRFYTHVRATGVPESRQQLIEVARLFTDDTVLDNVTRPYLIALAKYMNLQPFGTDVMLRYRIRYKMLELKKDDLSIYYEDAEQLSLSELKTACASRGIRSVDVEPSVLYSNLRLWLNMRLKDKIPSTLLIMATAYNYGNVQSKESLYDALCDVLIGIPDELYHEVKVNVVKEDEASAKQKLKQLREQEEIMKEEEQQEENAIVSVKDELSLDDQDKNIDAAAPDVKPHDTKPIGEAAAIKEK</sequence>
<reference key="1">
    <citation type="journal article" date="1993" name="Curr. Genet.">
        <title>A multitude of suppressors of group II intron-splicing defects in yeast.</title>
        <authorList>
            <person name="Waldherr M."/>
            <person name="Ragnini A."/>
            <person name="Jank B."/>
            <person name="Teply R."/>
            <person name="Wiesenberger G."/>
            <person name="Schweyen R.J."/>
        </authorList>
    </citation>
    <scope>NUCLEOTIDE SEQUENCE [GENOMIC DNA]</scope>
    <source>
        <strain>ATCC 44774 / DBY747</strain>
    </source>
</reference>
<reference key="2">
    <citation type="thesis" date="1996" institute="Vienna Biocenter" country="Austria">
        <title>Isolation and characterisation of suppressors of mrs2-1 mutation in saccharomyces cerevisiae.</title>
        <authorList>
            <person name="Teply R."/>
        </authorList>
    </citation>
    <scope>NUCLEOTIDE SEQUENCE [GENOMIC DNA]</scope>
    <source>
        <strain>ATCC 44774 / DBY747</strain>
    </source>
</reference>
<reference key="3">
    <citation type="journal article" date="1997" name="Nature">
        <title>The nucleotide sequence of Saccharomyces cerevisiae chromosome XVI.</title>
        <authorList>
            <person name="Bussey H."/>
            <person name="Storms R.K."/>
            <person name="Ahmed A."/>
            <person name="Albermann K."/>
            <person name="Allen E."/>
            <person name="Ansorge W."/>
            <person name="Araujo R."/>
            <person name="Aparicio A."/>
            <person name="Barrell B.G."/>
            <person name="Badcock K."/>
            <person name="Benes V."/>
            <person name="Botstein D."/>
            <person name="Bowman S."/>
            <person name="Brueckner M."/>
            <person name="Carpenter J."/>
            <person name="Cherry J.M."/>
            <person name="Chung E."/>
            <person name="Churcher C.M."/>
            <person name="Coster F."/>
            <person name="Davis K."/>
            <person name="Davis R.W."/>
            <person name="Dietrich F.S."/>
            <person name="Delius H."/>
            <person name="DiPaolo T."/>
            <person name="Dubois E."/>
            <person name="Duesterhoeft A."/>
            <person name="Duncan M."/>
            <person name="Floeth M."/>
            <person name="Fortin N."/>
            <person name="Friesen J.D."/>
            <person name="Fritz C."/>
            <person name="Goffeau A."/>
            <person name="Hall J."/>
            <person name="Hebling U."/>
            <person name="Heumann K."/>
            <person name="Hilbert H."/>
            <person name="Hillier L.W."/>
            <person name="Hunicke-Smith S."/>
            <person name="Hyman R.W."/>
            <person name="Johnston M."/>
            <person name="Kalman S."/>
            <person name="Kleine K."/>
            <person name="Komp C."/>
            <person name="Kurdi O."/>
            <person name="Lashkari D."/>
            <person name="Lew H."/>
            <person name="Lin A."/>
            <person name="Lin D."/>
            <person name="Louis E.J."/>
            <person name="Marathe R."/>
            <person name="Messenguy F."/>
            <person name="Mewes H.-W."/>
            <person name="Mirtipati S."/>
            <person name="Moestl D."/>
            <person name="Mueller-Auer S."/>
            <person name="Namath A."/>
            <person name="Nentwich U."/>
            <person name="Oefner P."/>
            <person name="Pearson D."/>
            <person name="Petel F.X."/>
            <person name="Pohl T.M."/>
            <person name="Purnelle B."/>
            <person name="Rajandream M.A."/>
            <person name="Rechmann S."/>
            <person name="Rieger M."/>
            <person name="Riles L."/>
            <person name="Roberts D."/>
            <person name="Schaefer M."/>
            <person name="Scharfe M."/>
            <person name="Scherens B."/>
            <person name="Schramm S."/>
            <person name="Schroeder M."/>
            <person name="Sdicu A.-M."/>
            <person name="Tettelin H."/>
            <person name="Urrestarazu L.A."/>
            <person name="Ushinsky S."/>
            <person name="Vierendeels F."/>
            <person name="Vissers S."/>
            <person name="Voss H."/>
            <person name="Walsh S.V."/>
            <person name="Wambutt R."/>
            <person name="Wang Y."/>
            <person name="Wedler E."/>
            <person name="Wedler H."/>
            <person name="Winnett E."/>
            <person name="Zhong W.-W."/>
            <person name="Zollner A."/>
            <person name="Vo D.H."/>
            <person name="Hani J."/>
        </authorList>
    </citation>
    <scope>NUCLEOTIDE SEQUENCE [LARGE SCALE GENOMIC DNA]</scope>
    <source>
        <strain>ATCC 204508 / S288c</strain>
    </source>
</reference>
<reference key="4">
    <citation type="journal article" date="2014" name="G3 (Bethesda)">
        <title>The reference genome sequence of Saccharomyces cerevisiae: Then and now.</title>
        <authorList>
            <person name="Engel S.R."/>
            <person name="Dietrich F.S."/>
            <person name="Fisk D.G."/>
            <person name="Binkley G."/>
            <person name="Balakrishnan R."/>
            <person name="Costanzo M.C."/>
            <person name="Dwight S.S."/>
            <person name="Hitz B.C."/>
            <person name="Karra K."/>
            <person name="Nash R.S."/>
            <person name="Weng S."/>
            <person name="Wong E.D."/>
            <person name="Lloyd P."/>
            <person name="Skrzypek M.S."/>
            <person name="Miyasato S.R."/>
            <person name="Simison M."/>
            <person name="Cherry J.M."/>
        </authorList>
    </citation>
    <scope>GENOME REANNOTATION</scope>
    <source>
        <strain>ATCC 204508 / S288c</strain>
    </source>
</reference>
<reference key="5">
    <citation type="journal article" date="2003" name="Nature">
        <title>Global analysis of protein localization in budding yeast.</title>
        <authorList>
            <person name="Huh W.-K."/>
            <person name="Falvo J.V."/>
            <person name="Gerke L.C."/>
            <person name="Carroll A.S."/>
            <person name="Howson R.W."/>
            <person name="Weissman J.S."/>
            <person name="O'Shea E.K."/>
        </authorList>
    </citation>
    <scope>SUBCELLULAR LOCATION [LARGE SCALE ANALYSIS]</scope>
</reference>
<reference key="6">
    <citation type="journal article" date="2003" name="Nature">
        <title>Global analysis of protein expression in yeast.</title>
        <authorList>
            <person name="Ghaemmaghami S."/>
            <person name="Huh W.-K."/>
            <person name="Bower K."/>
            <person name="Howson R.W."/>
            <person name="Belle A."/>
            <person name="Dephoure N."/>
            <person name="O'Shea E.K."/>
            <person name="Weissman J.S."/>
        </authorList>
    </citation>
    <scope>LEVEL OF PROTEIN EXPRESSION [LARGE SCALE ANALYSIS]</scope>
</reference>
<reference key="7">
    <citation type="journal article" date="2004" name="J. Biol. Chem.">
        <title>The LETM1/YOL027 gene family encodes a factor of the mitochondrial K+ homeostasis with a potential role in the Wolf-Hirschhorn syndrome.</title>
        <authorList>
            <person name="Nowikovsky K."/>
            <person name="Froschauer E.M."/>
            <person name="Zsurka G."/>
            <person name="Samaj J."/>
            <person name="Reipert S."/>
            <person name="Kolisek M."/>
            <person name="Wiesenberger G."/>
            <person name="Schweyen R.J."/>
        </authorList>
    </citation>
    <scope>FUNCTION</scope>
    <scope>SUBCELLULAR LOCATION</scope>
</reference>
<reference key="8">
    <citation type="journal article" date="2006" name="J. Cell Biol.">
        <title>Mdm38 interacts with ribosomes and is a component of the mitochondrial protein export machinery.</title>
        <authorList>
            <person name="Frazier A.E."/>
            <person name="Taylor R.D."/>
            <person name="Mick D.U."/>
            <person name="Warscheid B."/>
            <person name="Stoepel N."/>
            <person name="Meyer H.E."/>
            <person name="Ryan M.T."/>
            <person name="Guiard B."/>
            <person name="Rehling P."/>
        </authorList>
    </citation>
    <scope>SUBCELLULAR LOCATION</scope>
    <scope>ASSOCIATION WITH THE MITOCHONDRIAL RIBOSOMES</scope>
</reference>
<reference key="9">
    <citation type="journal article" date="2006" name="J. Proteome Res.">
        <title>Toward the complete yeast mitochondrial proteome: multidimensional separation techniques for mitochondrial proteomics.</title>
        <authorList>
            <person name="Reinders J."/>
            <person name="Zahedi R.P."/>
            <person name="Pfanner N."/>
            <person name="Meisinger C."/>
            <person name="Sickmann A."/>
        </authorList>
    </citation>
    <scope>SUBCELLULAR LOCATION [LARGE SCALE ANALYSIS]</scope>
    <scope>IDENTIFICATION BY MASS SPECTROMETRY</scope>
</reference>
<evidence type="ECO:0000250" key="1"/>
<evidence type="ECO:0000255" key="2"/>
<evidence type="ECO:0000255" key="3">
    <source>
        <dbReference type="PROSITE-ProRule" id="PRU01094"/>
    </source>
</evidence>
<evidence type="ECO:0000256" key="4">
    <source>
        <dbReference type="SAM" id="MobiDB-lite"/>
    </source>
</evidence>
<evidence type="ECO:0000269" key="5">
    <source>
    </source>
</evidence>
<evidence type="ECO:0000269" key="6">
    <source>
    </source>
</evidence>
<evidence type="ECO:0000269" key="7">
    <source>
    </source>
</evidence>
<evidence type="ECO:0000269" key="8">
    <source>
    </source>
</evidence>
<evidence type="ECO:0000269" key="9">
    <source>
    </source>
</evidence>
<evidence type="ECO:0000305" key="10"/>